<gene>
    <name evidence="8" type="primary">Ncf1</name>
</gene>
<reference key="1">
    <citation type="journal article" date="1994" name="Immunogenetics">
        <title>Cloning and functional expression of the mouse homologue of p47phox.</title>
        <authorList>
            <person name="Jackson S.H."/>
            <person name="Malech H.L."/>
            <person name="Kozak C.A."/>
            <person name="Lomax K.J."/>
            <person name="Gallin J.I."/>
            <person name="Holland S.M."/>
        </authorList>
    </citation>
    <scope>NUCLEOTIDE SEQUENCE [MRNA]</scope>
    <source>
        <tissue>Macrophage</tissue>
    </source>
</reference>
<reference key="2">
    <citation type="journal article" date="1998" name="Eur. J. Biochem.">
        <title>Functional modules and expression of mouse p40(phox) and p67(phox), SH3-domain-containing proteins involved in the phagocyte NADPH oxidase complex.</title>
        <authorList>
            <person name="Mizuki K."/>
            <person name="Kadomatsu K."/>
            <person name="Hata K."/>
            <person name="Ito T."/>
            <person name="Fan Q.-W."/>
            <person name="Kage Y."/>
            <person name="Fukumaki Y."/>
            <person name="Sakaki Y."/>
            <person name="Takeshige K."/>
            <person name="Sumimoto H."/>
        </authorList>
    </citation>
    <scope>NUCLEOTIDE SEQUENCE [MRNA]</scope>
    <source>
        <tissue>Leukemia</tissue>
    </source>
</reference>
<reference key="3">
    <citation type="submission" date="2000-05" db="EMBL/GenBank/DDBJ databases">
        <authorList>
            <person name="Green E.D."/>
        </authorList>
    </citation>
    <scope>NUCLEOTIDE SEQUENCE [GENOMIC DNA]</scope>
</reference>
<reference key="4">
    <citation type="journal article" date="2005" name="Science">
        <title>The transcriptional landscape of the mammalian genome.</title>
        <authorList>
            <person name="Carninci P."/>
            <person name="Kasukawa T."/>
            <person name="Katayama S."/>
            <person name="Gough J."/>
            <person name="Frith M.C."/>
            <person name="Maeda N."/>
            <person name="Oyama R."/>
            <person name="Ravasi T."/>
            <person name="Lenhard B."/>
            <person name="Wells C."/>
            <person name="Kodzius R."/>
            <person name="Shimokawa K."/>
            <person name="Bajic V.B."/>
            <person name="Brenner S.E."/>
            <person name="Batalov S."/>
            <person name="Forrest A.R."/>
            <person name="Zavolan M."/>
            <person name="Davis M.J."/>
            <person name="Wilming L.G."/>
            <person name="Aidinis V."/>
            <person name="Allen J.E."/>
            <person name="Ambesi-Impiombato A."/>
            <person name="Apweiler R."/>
            <person name="Aturaliya R.N."/>
            <person name="Bailey T.L."/>
            <person name="Bansal M."/>
            <person name="Baxter L."/>
            <person name="Beisel K.W."/>
            <person name="Bersano T."/>
            <person name="Bono H."/>
            <person name="Chalk A.M."/>
            <person name="Chiu K.P."/>
            <person name="Choudhary V."/>
            <person name="Christoffels A."/>
            <person name="Clutterbuck D.R."/>
            <person name="Crowe M.L."/>
            <person name="Dalla E."/>
            <person name="Dalrymple B.P."/>
            <person name="de Bono B."/>
            <person name="Della Gatta G."/>
            <person name="di Bernardo D."/>
            <person name="Down T."/>
            <person name="Engstrom P."/>
            <person name="Fagiolini M."/>
            <person name="Faulkner G."/>
            <person name="Fletcher C.F."/>
            <person name="Fukushima T."/>
            <person name="Furuno M."/>
            <person name="Futaki S."/>
            <person name="Gariboldi M."/>
            <person name="Georgii-Hemming P."/>
            <person name="Gingeras T.R."/>
            <person name="Gojobori T."/>
            <person name="Green R.E."/>
            <person name="Gustincich S."/>
            <person name="Harbers M."/>
            <person name="Hayashi Y."/>
            <person name="Hensch T.K."/>
            <person name="Hirokawa N."/>
            <person name="Hill D."/>
            <person name="Huminiecki L."/>
            <person name="Iacono M."/>
            <person name="Ikeo K."/>
            <person name="Iwama A."/>
            <person name="Ishikawa T."/>
            <person name="Jakt M."/>
            <person name="Kanapin A."/>
            <person name="Katoh M."/>
            <person name="Kawasawa Y."/>
            <person name="Kelso J."/>
            <person name="Kitamura H."/>
            <person name="Kitano H."/>
            <person name="Kollias G."/>
            <person name="Krishnan S.P."/>
            <person name="Kruger A."/>
            <person name="Kummerfeld S.K."/>
            <person name="Kurochkin I.V."/>
            <person name="Lareau L.F."/>
            <person name="Lazarevic D."/>
            <person name="Lipovich L."/>
            <person name="Liu J."/>
            <person name="Liuni S."/>
            <person name="McWilliam S."/>
            <person name="Madan Babu M."/>
            <person name="Madera M."/>
            <person name="Marchionni L."/>
            <person name="Matsuda H."/>
            <person name="Matsuzawa S."/>
            <person name="Miki H."/>
            <person name="Mignone F."/>
            <person name="Miyake S."/>
            <person name="Morris K."/>
            <person name="Mottagui-Tabar S."/>
            <person name="Mulder N."/>
            <person name="Nakano N."/>
            <person name="Nakauchi H."/>
            <person name="Ng P."/>
            <person name="Nilsson R."/>
            <person name="Nishiguchi S."/>
            <person name="Nishikawa S."/>
            <person name="Nori F."/>
            <person name="Ohara O."/>
            <person name="Okazaki Y."/>
            <person name="Orlando V."/>
            <person name="Pang K.C."/>
            <person name="Pavan W.J."/>
            <person name="Pavesi G."/>
            <person name="Pesole G."/>
            <person name="Petrovsky N."/>
            <person name="Piazza S."/>
            <person name="Reed J."/>
            <person name="Reid J.F."/>
            <person name="Ring B.Z."/>
            <person name="Ringwald M."/>
            <person name="Rost B."/>
            <person name="Ruan Y."/>
            <person name="Salzberg S.L."/>
            <person name="Sandelin A."/>
            <person name="Schneider C."/>
            <person name="Schoenbach C."/>
            <person name="Sekiguchi K."/>
            <person name="Semple C.A."/>
            <person name="Seno S."/>
            <person name="Sessa L."/>
            <person name="Sheng Y."/>
            <person name="Shibata Y."/>
            <person name="Shimada H."/>
            <person name="Shimada K."/>
            <person name="Silva D."/>
            <person name="Sinclair B."/>
            <person name="Sperling S."/>
            <person name="Stupka E."/>
            <person name="Sugiura K."/>
            <person name="Sultana R."/>
            <person name="Takenaka Y."/>
            <person name="Taki K."/>
            <person name="Tammoja K."/>
            <person name="Tan S.L."/>
            <person name="Tang S."/>
            <person name="Taylor M.S."/>
            <person name="Tegner J."/>
            <person name="Teichmann S.A."/>
            <person name="Ueda H.R."/>
            <person name="van Nimwegen E."/>
            <person name="Verardo R."/>
            <person name="Wei C.L."/>
            <person name="Yagi K."/>
            <person name="Yamanishi H."/>
            <person name="Zabarovsky E."/>
            <person name="Zhu S."/>
            <person name="Zimmer A."/>
            <person name="Hide W."/>
            <person name="Bult C."/>
            <person name="Grimmond S.M."/>
            <person name="Teasdale R.D."/>
            <person name="Liu E.T."/>
            <person name="Brusic V."/>
            <person name="Quackenbush J."/>
            <person name="Wahlestedt C."/>
            <person name="Mattick J.S."/>
            <person name="Hume D.A."/>
            <person name="Kai C."/>
            <person name="Sasaki D."/>
            <person name="Tomaru Y."/>
            <person name="Fukuda S."/>
            <person name="Kanamori-Katayama M."/>
            <person name="Suzuki M."/>
            <person name="Aoki J."/>
            <person name="Arakawa T."/>
            <person name="Iida J."/>
            <person name="Imamura K."/>
            <person name="Itoh M."/>
            <person name="Kato T."/>
            <person name="Kawaji H."/>
            <person name="Kawagashira N."/>
            <person name="Kawashima T."/>
            <person name="Kojima M."/>
            <person name="Kondo S."/>
            <person name="Konno H."/>
            <person name="Nakano K."/>
            <person name="Ninomiya N."/>
            <person name="Nishio T."/>
            <person name="Okada M."/>
            <person name="Plessy C."/>
            <person name="Shibata K."/>
            <person name="Shiraki T."/>
            <person name="Suzuki S."/>
            <person name="Tagami M."/>
            <person name="Waki K."/>
            <person name="Watahiki A."/>
            <person name="Okamura-Oho Y."/>
            <person name="Suzuki H."/>
            <person name="Kawai J."/>
            <person name="Hayashizaki Y."/>
        </authorList>
    </citation>
    <scope>NUCLEOTIDE SEQUENCE [LARGE SCALE MRNA]</scope>
    <source>
        <strain>C57BL/6J</strain>
        <strain>NOD</strain>
        <tissue>Bone marrow</tissue>
        <tissue>Colon</tissue>
    </source>
</reference>
<reference key="5">
    <citation type="submission" date="2005-09" db="EMBL/GenBank/DDBJ databases">
        <authorList>
            <person name="Mural R.J."/>
            <person name="Adams M.D."/>
            <person name="Myers E.W."/>
            <person name="Smith H.O."/>
            <person name="Venter J.C."/>
        </authorList>
    </citation>
    <scope>NUCLEOTIDE SEQUENCE [LARGE SCALE GENOMIC DNA]</scope>
</reference>
<reference key="6">
    <citation type="journal article" date="2006" name="Free Radic. Biol. Med.">
        <title>Noxa1 is a central component of the smooth muscle NADPH oxidase in mice.</title>
        <authorList>
            <person name="Ambasta R.K."/>
            <person name="Schreiber J.G."/>
            <person name="Janiszewski M."/>
            <person name="Busse R."/>
            <person name="Brandes R.P."/>
        </authorList>
    </citation>
    <scope>INTERACTION WITH NOXA1</scope>
</reference>
<reference key="7">
    <citation type="journal article" date="2010" name="Cell">
        <title>A tissue-specific atlas of mouse protein phosphorylation and expression.</title>
        <authorList>
            <person name="Huttlin E.L."/>
            <person name="Jedrychowski M.P."/>
            <person name="Elias J.E."/>
            <person name="Goswami T."/>
            <person name="Rad R."/>
            <person name="Beausoleil S.A."/>
            <person name="Villen J."/>
            <person name="Haas W."/>
            <person name="Sowa M.E."/>
            <person name="Gygi S.P."/>
        </authorList>
    </citation>
    <scope>IDENTIFICATION BY MASS SPECTROMETRY [LARGE SCALE ANALYSIS]</scope>
    <source>
        <tissue>Spleen</tissue>
    </source>
</reference>
<reference key="8">
    <citation type="journal article" date="2015" name="Cell Res.">
        <title>Park7 interacts with p47(phox) to direct NADPH oxidase-dependent ROS production and protect against sepsis.</title>
        <authorList>
            <person name="Liu W."/>
            <person name="Wu H."/>
            <person name="Chen L."/>
            <person name="Wen Y."/>
            <person name="Kong X."/>
            <person name="Gao W.Q."/>
        </authorList>
    </citation>
    <scope>INTERACTION WITH PARK7</scope>
    <scope>SUBCELLULAR LOCATION</scope>
    <scope>PHOSPHORYLATION</scope>
</reference>
<protein>
    <recommendedName>
        <fullName evidence="7">Neutrophil cytosol factor 1</fullName>
        <shortName>NCF-1</shortName>
    </recommendedName>
    <alternativeName>
        <fullName>47 kDa neutrophil oxidase factor</fullName>
    </alternativeName>
    <alternativeName>
        <fullName>NCF-47K</fullName>
    </alternativeName>
    <alternativeName>
        <fullName>Neutrophil NADPH oxidase factor 1</fullName>
    </alternativeName>
    <alternativeName>
        <fullName>p47-phox</fullName>
    </alternativeName>
</protein>
<organism>
    <name type="scientific">Mus musculus</name>
    <name type="common">Mouse</name>
    <dbReference type="NCBI Taxonomy" id="10090"/>
    <lineage>
        <taxon>Eukaryota</taxon>
        <taxon>Metazoa</taxon>
        <taxon>Chordata</taxon>
        <taxon>Craniata</taxon>
        <taxon>Vertebrata</taxon>
        <taxon>Euteleostomi</taxon>
        <taxon>Mammalia</taxon>
        <taxon>Eutheria</taxon>
        <taxon>Euarchontoglires</taxon>
        <taxon>Glires</taxon>
        <taxon>Rodentia</taxon>
        <taxon>Myomorpha</taxon>
        <taxon>Muroidea</taxon>
        <taxon>Muridae</taxon>
        <taxon>Murinae</taxon>
        <taxon>Mus</taxon>
        <taxon>Mus</taxon>
    </lineage>
</organism>
<feature type="chain" id="PRO_0000096763" description="Neutrophil cytosol factor 1">
    <location>
        <begin position="1"/>
        <end position="390"/>
    </location>
</feature>
<feature type="domain" description="PX" evidence="2">
    <location>
        <begin position="4"/>
        <end position="125"/>
    </location>
</feature>
<feature type="domain" description="SH3 1" evidence="3">
    <location>
        <begin position="156"/>
        <end position="215"/>
    </location>
</feature>
<feature type="domain" description="SH3 2" evidence="3">
    <location>
        <begin position="226"/>
        <end position="285"/>
    </location>
</feature>
<feature type="region of interest" description="Disordered" evidence="4">
    <location>
        <begin position="291"/>
        <end position="390"/>
    </location>
</feature>
<feature type="compositionally biased region" description="Basic and acidic residues" evidence="4">
    <location>
        <begin position="374"/>
        <end position="383"/>
    </location>
</feature>
<feature type="modified residue" description="Phosphoserine" evidence="1">
    <location>
        <position position="304"/>
    </location>
</feature>
<feature type="modified residue" description="Phosphoserine" evidence="1">
    <location>
        <position position="321"/>
    </location>
</feature>
<feature type="modified residue" description="Phosphoserine" evidence="1">
    <location>
        <position position="329"/>
    </location>
</feature>
<feature type="modified residue" description="Phosphoserine" evidence="1">
    <location>
        <position position="346"/>
    </location>
</feature>
<feature type="sequence conflict" description="In Ref. 1; AAA50469." evidence="7" ref="1">
    <original>Y</original>
    <variation>H</variation>
    <location>
        <position position="161"/>
    </location>
</feature>
<feature type="sequence conflict" description="In Ref. 1; AAA50469." evidence="7" ref="1">
    <original>GPL</original>
    <variation>RAA</variation>
    <location>
        <begin position="343"/>
        <end position="345"/>
    </location>
</feature>
<feature type="sequence conflict" description="In Ref. 2; BAA25649." evidence="7" ref="2">
    <original>P</original>
    <variation>Q</variation>
    <location>
        <position position="344"/>
    </location>
</feature>
<name>NCF1_MOUSE</name>
<sequence>MGDTFIRHIALLGFEKRFIPSQHYVYMFLVKWQDLSEKVVYRKFTEIYEFHKMLKEMFPIEAGEIHTENRVIPHLPAPRWFDGQRAAESRQGTLTEYFNGLMGLPVKISRCPHLLDFFKVRPDDLKLPTDSQAKKPETYLVPKDGKNNVADITGPIILQTYRAIADYEKSSGTEMTVATGDVVDVVEKSESGWWFCQMKTKRGWVPASYLEPLDSPDEAEDPDPNYAGEPYVTIKAYAAVEEDEMSLSEGEAIEVIHKLLDGWWVVRKGDITGYFPSMYLQKAGEEITQAQRQIRGRGAPPRRSTIRNAQSIHQRSRKRLSQDTYRRNSVRFLQQRRRPGRPGPLSTDGTKDNPSTPRVKPQPAVPPRPSSDLILHRCTESTKRKLTSAV</sequence>
<keyword id="KW-0963">Cytoplasm</keyword>
<keyword id="KW-0446">Lipid-binding</keyword>
<keyword id="KW-0472">Membrane</keyword>
<keyword id="KW-0597">Phosphoprotein</keyword>
<keyword id="KW-1185">Reference proteome</keyword>
<keyword id="KW-0677">Repeat</keyword>
<keyword id="KW-0728">SH3 domain</keyword>
<accession>Q09014</accession>
<accession>O70144</accession>
<accession>Q3UE58</accession>
<accession>Q9JI34</accession>
<dbReference type="EMBL" id="L11455">
    <property type="protein sequence ID" value="AAA50469.1"/>
    <property type="molecule type" value="mRNA"/>
</dbReference>
<dbReference type="EMBL" id="AB002663">
    <property type="protein sequence ID" value="BAA25649.1"/>
    <property type="molecule type" value="mRNA"/>
</dbReference>
<dbReference type="EMBL" id="AF267747">
    <property type="protein sequence ID" value="AAF90134.1"/>
    <property type="molecule type" value="Genomic_DNA"/>
</dbReference>
<dbReference type="EMBL" id="AK149668">
    <property type="protein sequence ID" value="BAE29014.1"/>
    <property type="molecule type" value="mRNA"/>
</dbReference>
<dbReference type="EMBL" id="AK149732">
    <property type="protein sequence ID" value="BAE29053.1"/>
    <property type="molecule type" value="mRNA"/>
</dbReference>
<dbReference type="EMBL" id="AK152386">
    <property type="protein sequence ID" value="BAE31174.1"/>
    <property type="molecule type" value="mRNA"/>
</dbReference>
<dbReference type="EMBL" id="AK162308">
    <property type="protein sequence ID" value="BAE36845.1"/>
    <property type="molecule type" value="mRNA"/>
</dbReference>
<dbReference type="EMBL" id="AK170462">
    <property type="protein sequence ID" value="BAE41812.1"/>
    <property type="molecule type" value="mRNA"/>
</dbReference>
<dbReference type="EMBL" id="AK171559">
    <property type="protein sequence ID" value="BAE42526.1"/>
    <property type="molecule type" value="mRNA"/>
</dbReference>
<dbReference type="EMBL" id="CH466529">
    <property type="protein sequence ID" value="EDL19452.1"/>
    <property type="molecule type" value="Genomic_DNA"/>
</dbReference>
<dbReference type="CCDS" id="CCDS39298.1"/>
<dbReference type="RefSeq" id="NP_001272966.1">
    <property type="nucleotide sequence ID" value="NM_001286037.1"/>
</dbReference>
<dbReference type="RefSeq" id="NP_035006.3">
    <property type="nucleotide sequence ID" value="NM_010876.4"/>
</dbReference>
<dbReference type="SMR" id="Q09014"/>
<dbReference type="BioGRID" id="201701">
    <property type="interactions" value="3"/>
</dbReference>
<dbReference type="DIP" id="DIP-2665N"/>
<dbReference type="FunCoup" id="Q09014">
    <property type="interactions" value="551"/>
</dbReference>
<dbReference type="IntAct" id="Q09014">
    <property type="interactions" value="2"/>
</dbReference>
<dbReference type="STRING" id="10090.ENSMUSP00000016094"/>
<dbReference type="iPTMnet" id="Q09014"/>
<dbReference type="PhosphoSitePlus" id="Q09014"/>
<dbReference type="SwissPalm" id="Q09014"/>
<dbReference type="jPOST" id="Q09014"/>
<dbReference type="PaxDb" id="10090-ENSMUSP00000016094"/>
<dbReference type="PeptideAtlas" id="Q09014"/>
<dbReference type="ProteomicsDB" id="252649"/>
<dbReference type="Antibodypedia" id="3863">
    <property type="antibodies" value="934 antibodies from 38 providers"/>
</dbReference>
<dbReference type="DNASU" id="17969"/>
<dbReference type="Ensembl" id="ENSMUST00000111275.8">
    <property type="protein sequence ID" value="ENSMUSP00000106906.2"/>
    <property type="gene ID" value="ENSMUSG00000015950.14"/>
</dbReference>
<dbReference type="Ensembl" id="ENSMUST00000146354.8">
    <property type="protein sequence ID" value="ENSMUSP00000138121.2"/>
    <property type="gene ID" value="ENSMUSG00000015950.14"/>
</dbReference>
<dbReference type="GeneID" id="17969"/>
<dbReference type="KEGG" id="mmu:17969"/>
<dbReference type="UCSC" id="uc008zvh.3">
    <property type="organism name" value="mouse"/>
</dbReference>
<dbReference type="AGR" id="MGI:97283"/>
<dbReference type="CTD" id="653361"/>
<dbReference type="MGI" id="MGI:97283">
    <property type="gene designation" value="Ncf1"/>
</dbReference>
<dbReference type="VEuPathDB" id="HostDB:ENSMUSG00000015950"/>
<dbReference type="eggNOG" id="KOG4773">
    <property type="taxonomic scope" value="Eukaryota"/>
</dbReference>
<dbReference type="GeneTree" id="ENSGT00940000160014"/>
<dbReference type="HOGENOM" id="CLU_030529_0_0_1"/>
<dbReference type="InParanoid" id="Q09014"/>
<dbReference type="OrthoDB" id="10255964at2759"/>
<dbReference type="Reactome" id="R-MMU-1222556">
    <property type="pathway name" value="ROS and RNS production in phagocytes"/>
</dbReference>
<dbReference type="Reactome" id="R-MMU-1236973">
    <property type="pathway name" value="Cross-presentation of particulate exogenous antigens (phagosomes)"/>
</dbReference>
<dbReference type="Reactome" id="R-MMU-3299685">
    <property type="pathway name" value="Detoxification of Reactive Oxygen Species"/>
</dbReference>
<dbReference type="Reactome" id="R-MMU-4420097">
    <property type="pathway name" value="VEGFA-VEGFR2 Pathway"/>
</dbReference>
<dbReference type="Reactome" id="R-MMU-5668599">
    <property type="pathway name" value="RHO GTPases Activate NADPH Oxidases"/>
</dbReference>
<dbReference type="Reactome" id="R-MMU-9013149">
    <property type="pathway name" value="RAC1 GTPase cycle"/>
</dbReference>
<dbReference type="Reactome" id="R-MMU-9013404">
    <property type="pathway name" value="RAC2 GTPase cycle"/>
</dbReference>
<dbReference type="Reactome" id="R-MMU-9013423">
    <property type="pathway name" value="RAC3 GTPase cycle"/>
</dbReference>
<dbReference type="BioGRID-ORCS" id="17969">
    <property type="hits" value="4 hits in 78 CRISPR screens"/>
</dbReference>
<dbReference type="ChiTaRS" id="Ncf1">
    <property type="organism name" value="mouse"/>
</dbReference>
<dbReference type="PRO" id="PR:Q09014"/>
<dbReference type="Proteomes" id="UP000000589">
    <property type="component" value="Chromosome 5"/>
</dbReference>
<dbReference type="RNAct" id="Q09014">
    <property type="molecule type" value="protein"/>
</dbReference>
<dbReference type="Bgee" id="ENSMUSG00000015950">
    <property type="expression patterns" value="Expressed in granulocyte and 135 other cell types or tissues"/>
</dbReference>
<dbReference type="ExpressionAtlas" id="Q09014">
    <property type="expression patterns" value="baseline and differential"/>
</dbReference>
<dbReference type="GO" id="GO:0005737">
    <property type="term" value="C:cytoplasm"/>
    <property type="evidence" value="ECO:0000314"/>
    <property type="project" value="UniProtKB"/>
</dbReference>
<dbReference type="GO" id="GO:0009898">
    <property type="term" value="C:cytoplasmic side of plasma membrane"/>
    <property type="evidence" value="ECO:0000250"/>
    <property type="project" value="UniProtKB"/>
</dbReference>
<dbReference type="GO" id="GO:0005829">
    <property type="term" value="C:cytosol"/>
    <property type="evidence" value="ECO:0000266"/>
    <property type="project" value="MGI"/>
</dbReference>
<dbReference type="GO" id="GO:0030425">
    <property type="term" value="C:dendrite"/>
    <property type="evidence" value="ECO:0007669"/>
    <property type="project" value="Ensembl"/>
</dbReference>
<dbReference type="GO" id="GO:0016020">
    <property type="term" value="C:membrane"/>
    <property type="evidence" value="ECO:0000314"/>
    <property type="project" value="UniProtKB"/>
</dbReference>
<dbReference type="GO" id="GO:0043020">
    <property type="term" value="C:NADPH oxidase complex"/>
    <property type="evidence" value="ECO:0000250"/>
    <property type="project" value="UniProtKB"/>
</dbReference>
<dbReference type="GO" id="GO:0043025">
    <property type="term" value="C:neuronal cell body"/>
    <property type="evidence" value="ECO:0007669"/>
    <property type="project" value="Ensembl"/>
</dbReference>
<dbReference type="GO" id="GO:0035091">
    <property type="term" value="F:phosphatidylinositol binding"/>
    <property type="evidence" value="ECO:0000250"/>
    <property type="project" value="UniProtKB"/>
</dbReference>
<dbReference type="GO" id="GO:0043325">
    <property type="term" value="F:phosphatidylinositol-3,4-bisphosphate binding"/>
    <property type="evidence" value="ECO:0000250"/>
    <property type="project" value="UniProtKB"/>
</dbReference>
<dbReference type="GO" id="GO:0017124">
    <property type="term" value="F:SH3 domain binding"/>
    <property type="evidence" value="ECO:0007669"/>
    <property type="project" value="Ensembl"/>
</dbReference>
<dbReference type="GO" id="GO:0016175">
    <property type="term" value="F:superoxide-generating NAD(P)H oxidase activity"/>
    <property type="evidence" value="ECO:0000266"/>
    <property type="project" value="MGI"/>
</dbReference>
<dbReference type="GO" id="GO:0016176">
    <property type="term" value="F:superoxide-generating NADPH oxidase activator activity"/>
    <property type="evidence" value="ECO:0000314"/>
    <property type="project" value="MGI"/>
</dbReference>
<dbReference type="GO" id="GO:0006968">
    <property type="term" value="P:cellular defense response"/>
    <property type="evidence" value="ECO:0000315"/>
    <property type="project" value="MGI"/>
</dbReference>
<dbReference type="GO" id="GO:0071333">
    <property type="term" value="P:cellular response to glucose stimulus"/>
    <property type="evidence" value="ECO:0007669"/>
    <property type="project" value="Ensembl"/>
</dbReference>
<dbReference type="GO" id="GO:0071394">
    <property type="term" value="P:cellular response to testosterone stimulus"/>
    <property type="evidence" value="ECO:0007669"/>
    <property type="project" value="Ensembl"/>
</dbReference>
<dbReference type="GO" id="GO:0042742">
    <property type="term" value="P:defense response to bacterium"/>
    <property type="evidence" value="ECO:0000315"/>
    <property type="project" value="MGI"/>
</dbReference>
<dbReference type="GO" id="GO:0050832">
    <property type="term" value="P:defense response to fungus"/>
    <property type="evidence" value="ECO:0000315"/>
    <property type="project" value="MGI"/>
</dbReference>
<dbReference type="GO" id="GO:0050830">
    <property type="term" value="P:defense response to Gram-positive bacterium"/>
    <property type="evidence" value="ECO:0000315"/>
    <property type="project" value="MGI"/>
</dbReference>
<dbReference type="GO" id="GO:0050673">
    <property type="term" value="P:epithelial cell proliferation"/>
    <property type="evidence" value="ECO:0000315"/>
    <property type="project" value="MGI"/>
</dbReference>
<dbReference type="GO" id="GO:0050665">
    <property type="term" value="P:hydrogen peroxide biosynthetic process"/>
    <property type="evidence" value="ECO:0000315"/>
    <property type="project" value="MGI"/>
</dbReference>
<dbReference type="GO" id="GO:0006954">
    <property type="term" value="P:inflammatory response"/>
    <property type="evidence" value="ECO:0000315"/>
    <property type="project" value="MGI"/>
</dbReference>
<dbReference type="GO" id="GO:0001909">
    <property type="term" value="P:leukocyte mediated cytotoxicity"/>
    <property type="evidence" value="ECO:0000315"/>
    <property type="project" value="MGI"/>
</dbReference>
<dbReference type="GO" id="GO:0006691">
    <property type="term" value="P:leukotriene metabolic process"/>
    <property type="evidence" value="ECO:0000315"/>
    <property type="project" value="MGI"/>
</dbReference>
<dbReference type="GO" id="GO:0006742">
    <property type="term" value="P:NADP catabolic process"/>
    <property type="evidence" value="ECO:0000266"/>
    <property type="project" value="MGI"/>
</dbReference>
<dbReference type="GO" id="GO:0070947">
    <property type="term" value="P:neutrophil-mediated killing of fungus"/>
    <property type="evidence" value="ECO:0000315"/>
    <property type="project" value="MGI"/>
</dbReference>
<dbReference type="GO" id="GO:0070946">
    <property type="term" value="P:neutrophil-mediated killing of gram-positive bacterium"/>
    <property type="evidence" value="ECO:0000315"/>
    <property type="project" value="MGI"/>
</dbReference>
<dbReference type="GO" id="GO:0006612">
    <property type="term" value="P:protein targeting to membrane"/>
    <property type="evidence" value="ECO:0000250"/>
    <property type="project" value="UniProtKB"/>
</dbReference>
<dbReference type="GO" id="GO:0060264">
    <property type="term" value="P:regulation of respiratory burst involved in inflammatory response"/>
    <property type="evidence" value="ECO:0007669"/>
    <property type="project" value="Ensembl"/>
</dbReference>
<dbReference type="GO" id="GO:0045730">
    <property type="term" value="P:respiratory burst"/>
    <property type="evidence" value="ECO:0000315"/>
    <property type="project" value="MGI"/>
</dbReference>
<dbReference type="GO" id="GO:0002679">
    <property type="term" value="P:respiratory burst involved in defense response"/>
    <property type="evidence" value="ECO:0000315"/>
    <property type="project" value="MGI"/>
</dbReference>
<dbReference type="GO" id="GO:0009617">
    <property type="term" value="P:response to bacterium"/>
    <property type="evidence" value="ECO:0000315"/>
    <property type="project" value="MGI"/>
</dbReference>
<dbReference type="GO" id="GO:0001878">
    <property type="term" value="P:response to yeast"/>
    <property type="evidence" value="ECO:0000315"/>
    <property type="project" value="MGI"/>
</dbReference>
<dbReference type="GO" id="GO:0042554">
    <property type="term" value="P:superoxide anion generation"/>
    <property type="evidence" value="ECO:0000315"/>
    <property type="project" value="MGI"/>
</dbReference>
<dbReference type="CDD" id="cd06887">
    <property type="entry name" value="PX_p47phox"/>
    <property type="match status" value="1"/>
</dbReference>
<dbReference type="CDD" id="cd12021">
    <property type="entry name" value="SH3_p47phox_1"/>
    <property type="match status" value="1"/>
</dbReference>
<dbReference type="CDD" id="cd12022">
    <property type="entry name" value="SH3_p47phox_2"/>
    <property type="match status" value="1"/>
</dbReference>
<dbReference type="FunFam" id="2.30.30.40:FF:000121">
    <property type="entry name" value="Neutrophil cytosol factor 1"/>
    <property type="match status" value="1"/>
</dbReference>
<dbReference type="FunFam" id="3.30.1520.10:FF:000023">
    <property type="entry name" value="Neutrophil cytosol factor 1"/>
    <property type="match status" value="1"/>
</dbReference>
<dbReference type="FunFam" id="2.30.30.40:FF:000127">
    <property type="entry name" value="neutrophil cytosol factor 1"/>
    <property type="match status" value="1"/>
</dbReference>
<dbReference type="Gene3D" id="3.30.1520.10">
    <property type="entry name" value="Phox-like domain"/>
    <property type="match status" value="1"/>
</dbReference>
<dbReference type="Gene3D" id="2.30.30.40">
    <property type="entry name" value="SH3 Domains"/>
    <property type="match status" value="2"/>
</dbReference>
<dbReference type="InterPro" id="IPR051228">
    <property type="entry name" value="NADPH_Oxidase/PX-Domain"/>
</dbReference>
<dbReference type="InterPro" id="IPR015039">
    <property type="entry name" value="NCF1_C"/>
</dbReference>
<dbReference type="InterPro" id="IPR032136">
    <property type="entry name" value="NCF1_PBR/AIR"/>
</dbReference>
<dbReference type="InterPro" id="IPR035756">
    <property type="entry name" value="NCF1_SH3_1"/>
</dbReference>
<dbReference type="InterPro" id="IPR035757">
    <property type="entry name" value="NCF1_SH3_2"/>
</dbReference>
<dbReference type="InterPro" id="IPR001655">
    <property type="entry name" value="P47PHOX"/>
</dbReference>
<dbReference type="InterPro" id="IPR001683">
    <property type="entry name" value="PX_dom"/>
</dbReference>
<dbReference type="InterPro" id="IPR036871">
    <property type="entry name" value="PX_dom_sf"/>
</dbReference>
<dbReference type="InterPro" id="IPR034909">
    <property type="entry name" value="PX_p47phox"/>
</dbReference>
<dbReference type="InterPro" id="IPR036028">
    <property type="entry name" value="SH3-like_dom_sf"/>
</dbReference>
<dbReference type="InterPro" id="IPR001452">
    <property type="entry name" value="SH3_domain"/>
</dbReference>
<dbReference type="PANTHER" id="PTHR15706:SF6">
    <property type="entry name" value="NEUTROPHIL CYTOSOL FACTOR 1-RELATED"/>
    <property type="match status" value="1"/>
</dbReference>
<dbReference type="PANTHER" id="PTHR15706">
    <property type="entry name" value="SH3 MULTIPLE DOMAIN"/>
    <property type="match status" value="1"/>
</dbReference>
<dbReference type="Pfam" id="PF16621">
    <property type="entry name" value="NCF1_PBR_AIR"/>
    <property type="match status" value="1"/>
</dbReference>
<dbReference type="Pfam" id="PF08944">
    <property type="entry name" value="p47_phox_C"/>
    <property type="match status" value="1"/>
</dbReference>
<dbReference type="Pfam" id="PF00787">
    <property type="entry name" value="PX"/>
    <property type="match status" value="1"/>
</dbReference>
<dbReference type="Pfam" id="PF00018">
    <property type="entry name" value="SH3_1"/>
    <property type="match status" value="2"/>
</dbReference>
<dbReference type="PRINTS" id="PR00498">
    <property type="entry name" value="P47PHOX"/>
</dbReference>
<dbReference type="PRINTS" id="PR00452">
    <property type="entry name" value="SH3DOMAIN"/>
</dbReference>
<dbReference type="SMART" id="SM00312">
    <property type="entry name" value="PX"/>
    <property type="match status" value="1"/>
</dbReference>
<dbReference type="SMART" id="SM00326">
    <property type="entry name" value="SH3"/>
    <property type="match status" value="2"/>
</dbReference>
<dbReference type="SUPFAM" id="SSF64268">
    <property type="entry name" value="PX domain"/>
    <property type="match status" value="1"/>
</dbReference>
<dbReference type="SUPFAM" id="SSF50044">
    <property type="entry name" value="SH3-domain"/>
    <property type="match status" value="2"/>
</dbReference>
<dbReference type="PROSITE" id="PS50195">
    <property type="entry name" value="PX"/>
    <property type="match status" value="1"/>
</dbReference>
<dbReference type="PROSITE" id="PS50002">
    <property type="entry name" value="SH3"/>
    <property type="match status" value="2"/>
</dbReference>
<proteinExistence type="evidence at protein level"/>
<evidence type="ECO:0000250" key="1">
    <source>
        <dbReference type="UniProtKB" id="P14598"/>
    </source>
</evidence>
<evidence type="ECO:0000255" key="2">
    <source>
        <dbReference type="PROSITE-ProRule" id="PRU00147"/>
    </source>
</evidence>
<evidence type="ECO:0000255" key="3">
    <source>
        <dbReference type="PROSITE-ProRule" id="PRU00192"/>
    </source>
</evidence>
<evidence type="ECO:0000256" key="4">
    <source>
        <dbReference type="SAM" id="MobiDB-lite"/>
    </source>
</evidence>
<evidence type="ECO:0000269" key="5">
    <source>
    </source>
</evidence>
<evidence type="ECO:0000269" key="6">
    <source>
    </source>
</evidence>
<evidence type="ECO:0000305" key="7"/>
<evidence type="ECO:0000312" key="8">
    <source>
        <dbReference type="MGI" id="MGI:97283"/>
    </source>
</evidence>
<comment type="function">
    <text evidence="1">Subunit of the phagocyte NADPH oxidase complex that mediates the transfer of electrons from cytosolic NADPH to O2 to produce the superoxide anion (O2(-)). In the activated complex, electrons are first transferred from NADPH to flavin adenine dinucleotide (FAD) and subsequently transferred via two heme molecules to molecular oxygen, producing superoxide through an outer-sphere reaction. Activation of the NADPH oxidase complex is initiated by the assembly of cytosolic subunits of the NADPH oxidase complex with the core NADPH oxidase complex to form a complex at the plasma membrane or phagosomal membrane. This activation process is initiated by phosphorylation dependent binding of the cytosolic NCF1/p47-phox subunit to the C-terminus of CYBA/p22-phox.</text>
</comment>
<comment type="subunit">
    <text evidence="1 5 6">Component of the phagocyte NADPH oxidase complex composed of an obligatory core heterodimer formed by the membrane proteins CYBA and CYBB and the cytosolic regulatory subunits NCF1/p47-phox, NCF2/p67-phox, NCF4/p40-phox and the small GTPase RAC1 or RAC2. Part of a cytosolic complex composed at least by NCF1, NCF2 and NCF4. Interacts (via C-terminus) with NCF2 (via the C-terminal SH3 domain). Interacts with NCF4. Interacts with CYBB. Interacts (via the second SH3 domain) with CYBA; interaction is phosphorylation-dependent (By similarity). Interacts with NOXA1 (PubMed:16814099). Interacts with ADAM15. Interacts with TRAF4. Interacts with FASLG (By similarity). Interacts with PARK7 (via C-terminus); the interaction is enhanced by LPS and modulates NCF1 phosphorylation and membrane translocation (PubMed:26021615).</text>
</comment>
<comment type="subcellular location">
    <subcellularLocation>
        <location evidence="6">Cytoplasm</location>
        <location evidence="6">Cytosol</location>
    </subcellularLocation>
    <subcellularLocation>
        <location evidence="6">Membrane</location>
        <topology evidence="1">Peripheral membrane protein</topology>
        <orientation evidence="1">Cytoplasmic side</orientation>
    </subcellularLocation>
</comment>
<comment type="domain">
    <text evidence="1">The PX domain mediates interaction with phosphatidylinositol 3,4-bisphosphate and other anionic phospholipids. In the autoinhibited, unphosphorylated state an intramolecular interaction with the C-terminal SH3 domain precludes phospholipid binding and interaction with CYBA. Phosphorylation disrupts the autoinhibited state.</text>
</comment>
<comment type="PTM">
    <text evidence="6">Phosphorylated by PRKCD; phosphorylation induces activation of NCF1, leading to assembly and activation of the NADPH oxidase complex.</text>
</comment>